<feature type="chain" id="PRO_1000134908" description="Phosphoribosylformylglycinamidine synthase subunit PurL">
    <location>
        <begin position="1"/>
        <end position="729"/>
    </location>
</feature>
<feature type="active site" evidence="1">
    <location>
        <position position="54"/>
    </location>
</feature>
<feature type="active site" description="Proton acceptor" evidence="1">
    <location>
        <position position="100"/>
    </location>
</feature>
<feature type="binding site" evidence="1">
    <location>
        <position position="57"/>
    </location>
    <ligand>
        <name>ATP</name>
        <dbReference type="ChEBI" id="CHEBI:30616"/>
    </ligand>
</feature>
<feature type="binding site" evidence="1">
    <location>
        <position position="96"/>
    </location>
    <ligand>
        <name>ATP</name>
        <dbReference type="ChEBI" id="CHEBI:30616"/>
    </ligand>
</feature>
<feature type="binding site" evidence="1">
    <location>
        <position position="98"/>
    </location>
    <ligand>
        <name>Mg(2+)</name>
        <dbReference type="ChEBI" id="CHEBI:18420"/>
        <label>1</label>
    </ligand>
</feature>
<feature type="binding site" evidence="1">
    <location>
        <begin position="99"/>
        <end position="102"/>
    </location>
    <ligand>
        <name>substrate</name>
    </ligand>
</feature>
<feature type="binding site" evidence="1">
    <location>
        <position position="121"/>
    </location>
    <ligand>
        <name>substrate</name>
    </ligand>
</feature>
<feature type="binding site" evidence="1">
    <location>
        <position position="122"/>
    </location>
    <ligand>
        <name>Mg(2+)</name>
        <dbReference type="ChEBI" id="CHEBI:18420"/>
        <label>2</label>
    </ligand>
</feature>
<feature type="binding site" evidence="1">
    <location>
        <position position="245"/>
    </location>
    <ligand>
        <name>substrate</name>
    </ligand>
</feature>
<feature type="binding site" evidence="1">
    <location>
        <position position="273"/>
    </location>
    <ligand>
        <name>Mg(2+)</name>
        <dbReference type="ChEBI" id="CHEBI:18420"/>
        <label>2</label>
    </ligand>
</feature>
<feature type="binding site" evidence="1">
    <location>
        <begin position="317"/>
        <end position="319"/>
    </location>
    <ligand>
        <name>substrate</name>
    </ligand>
</feature>
<feature type="binding site" evidence="1">
    <location>
        <position position="495"/>
    </location>
    <ligand>
        <name>ATP</name>
        <dbReference type="ChEBI" id="CHEBI:30616"/>
    </ligand>
</feature>
<feature type="binding site" evidence="1">
    <location>
        <position position="532"/>
    </location>
    <ligand>
        <name>ATP</name>
        <dbReference type="ChEBI" id="CHEBI:30616"/>
    </ligand>
</feature>
<feature type="binding site" evidence="1">
    <location>
        <position position="533"/>
    </location>
    <ligand>
        <name>Mg(2+)</name>
        <dbReference type="ChEBI" id="CHEBI:18420"/>
        <label>1</label>
    </ligand>
</feature>
<feature type="binding site" evidence="1">
    <location>
        <position position="535"/>
    </location>
    <ligand>
        <name>substrate</name>
    </ligand>
</feature>
<gene>
    <name evidence="1" type="primary">purL</name>
    <name type="ordered locus">Sca_0691</name>
</gene>
<reference key="1">
    <citation type="journal article" date="2009" name="Appl. Environ. Microbiol.">
        <title>Genome analysis of the meat starter culture bacterium Staphylococcus carnosus TM300.</title>
        <authorList>
            <person name="Rosenstein R."/>
            <person name="Nerz C."/>
            <person name="Biswas L."/>
            <person name="Resch A."/>
            <person name="Raddatz G."/>
            <person name="Schuster S.C."/>
            <person name="Goetz F."/>
        </authorList>
    </citation>
    <scope>NUCLEOTIDE SEQUENCE [LARGE SCALE GENOMIC DNA]</scope>
    <source>
        <strain>TM300</strain>
    </source>
</reference>
<protein>
    <recommendedName>
        <fullName evidence="1">Phosphoribosylformylglycinamidine synthase subunit PurL</fullName>
        <shortName evidence="1">FGAM synthase</shortName>
        <ecNumber evidence="1">6.3.5.3</ecNumber>
    </recommendedName>
    <alternativeName>
        <fullName evidence="1">Formylglycinamide ribonucleotide amidotransferase subunit II</fullName>
        <shortName evidence="1">FGAR amidotransferase II</shortName>
        <shortName evidence="1">FGAR-AT II</shortName>
    </alternativeName>
    <alternativeName>
        <fullName evidence="1">Glutamine amidotransferase PurL</fullName>
    </alternativeName>
    <alternativeName>
        <fullName evidence="1">Phosphoribosylformylglycinamidine synthase subunit II</fullName>
    </alternativeName>
</protein>
<comment type="function">
    <text evidence="1">Part of the phosphoribosylformylglycinamidine synthase complex involved in the purines biosynthetic pathway. Catalyzes the ATP-dependent conversion of formylglycinamide ribonucleotide (FGAR) and glutamine to yield formylglycinamidine ribonucleotide (FGAM) and glutamate. The FGAM synthase complex is composed of three subunits. PurQ produces an ammonia molecule by converting glutamine to glutamate. PurL transfers the ammonia molecule to FGAR to form FGAM in an ATP-dependent manner. PurS interacts with PurQ and PurL and is thought to assist in the transfer of the ammonia molecule from PurQ to PurL.</text>
</comment>
<comment type="catalytic activity">
    <reaction evidence="1">
        <text>N(2)-formyl-N(1)-(5-phospho-beta-D-ribosyl)glycinamide + L-glutamine + ATP + H2O = 2-formamido-N(1)-(5-O-phospho-beta-D-ribosyl)acetamidine + L-glutamate + ADP + phosphate + H(+)</text>
        <dbReference type="Rhea" id="RHEA:17129"/>
        <dbReference type="ChEBI" id="CHEBI:15377"/>
        <dbReference type="ChEBI" id="CHEBI:15378"/>
        <dbReference type="ChEBI" id="CHEBI:29985"/>
        <dbReference type="ChEBI" id="CHEBI:30616"/>
        <dbReference type="ChEBI" id="CHEBI:43474"/>
        <dbReference type="ChEBI" id="CHEBI:58359"/>
        <dbReference type="ChEBI" id="CHEBI:147286"/>
        <dbReference type="ChEBI" id="CHEBI:147287"/>
        <dbReference type="ChEBI" id="CHEBI:456216"/>
        <dbReference type="EC" id="6.3.5.3"/>
    </reaction>
</comment>
<comment type="pathway">
    <text evidence="1">Purine metabolism; IMP biosynthesis via de novo pathway; 5-amino-1-(5-phospho-D-ribosyl)imidazole from N(2)-formyl-N(1)-(5-phospho-D-ribosyl)glycinamide: step 1/2.</text>
</comment>
<comment type="subunit">
    <text evidence="1">Monomer. Part of the FGAM synthase complex composed of 1 PurL, 1 PurQ and 2 PurS subunits.</text>
</comment>
<comment type="subcellular location">
    <subcellularLocation>
        <location evidence="1">Cytoplasm</location>
    </subcellularLocation>
</comment>
<comment type="similarity">
    <text evidence="1">Belongs to the FGAMS family.</text>
</comment>
<sequence>MPKFIEPSIEEIKAEKLYSDMGLTDAEYDKVVDILGREPNFTEVGIFSVMWSEHCSYKHSKPFLKQFPTTSEHVLMGPGEGAGVVDIGDDQAVVFKVESHNHPSAIEPYQGAATGVGGIIRDIVSIGARPINLLNSLRFGELDEIQNRTLTRGVVAGIGGYGNCIGIPTTAGEIEFDERYDGNPLVNAMCVGIIDHDMIQKGTAKGVGNSVIYVGLKTGRDGIHGATFASEELSEESESKRPSVQIGDPFVGKKLMEATLEAITFPELVGIQDMGAAGLTSSSSEMAAKGGSGMHMRLDQVPVREEGISPYEMMLSETQERMLLVVEKGTEQKFLDLFDKHELDSAVIGEVTDTNRFVLTYEDEVYADIPVEPLADEAPVYILEGEEKAHNTSKNDYSNVDVNDVFKKLLAHPTIASKRYLYEQYDQQVGANTVVKPGLQASVVRVEGTNKAIASTIDGEARYVYNQPYEGGKMVVAEAYRNLIAVGATPLAMTDCLNYGSPEKKEIYQQLIDSTKGMAEACEVLKTPVVSGNVSLYNETKGTSIFPTPVVGMVGLIEDIDYLNDFHPHAGDKLYLVGETRNDFGGSQLEKLLYGKVNHESEALDLSEEVEKGEQIKKAIRDGKASHVQTVGKGGLLITLARFSAFYGLGVDAKLDVTDAQLFSESQGRYIVAVKEGQTLDIPNAQEIGTVKDNGQFKVTNGQTTVEENVSTLNEIWEGAIPQCMTSAD</sequence>
<organism>
    <name type="scientific">Staphylococcus carnosus (strain TM300)</name>
    <dbReference type="NCBI Taxonomy" id="396513"/>
    <lineage>
        <taxon>Bacteria</taxon>
        <taxon>Bacillati</taxon>
        <taxon>Bacillota</taxon>
        <taxon>Bacilli</taxon>
        <taxon>Bacillales</taxon>
        <taxon>Staphylococcaceae</taxon>
        <taxon>Staphylococcus</taxon>
    </lineage>
</organism>
<accession>B9DQ38</accession>
<proteinExistence type="inferred from homology"/>
<dbReference type="EC" id="6.3.5.3" evidence="1"/>
<dbReference type="EMBL" id="AM295250">
    <property type="protein sequence ID" value="CAL27602.1"/>
    <property type="molecule type" value="Genomic_DNA"/>
</dbReference>
<dbReference type="RefSeq" id="WP_015899945.1">
    <property type="nucleotide sequence ID" value="NC_012121.1"/>
</dbReference>
<dbReference type="SMR" id="B9DQ38"/>
<dbReference type="GeneID" id="93795629"/>
<dbReference type="KEGG" id="sca:SCA_0691"/>
<dbReference type="eggNOG" id="COG0046">
    <property type="taxonomic scope" value="Bacteria"/>
</dbReference>
<dbReference type="HOGENOM" id="CLU_003100_0_1_9"/>
<dbReference type="OrthoDB" id="9804441at2"/>
<dbReference type="BioCyc" id="SCAR396513:SCA_RS03510-MONOMER"/>
<dbReference type="UniPathway" id="UPA00074">
    <property type="reaction ID" value="UER00128"/>
</dbReference>
<dbReference type="Proteomes" id="UP000000444">
    <property type="component" value="Chromosome"/>
</dbReference>
<dbReference type="GO" id="GO:0005737">
    <property type="term" value="C:cytoplasm"/>
    <property type="evidence" value="ECO:0007669"/>
    <property type="project" value="UniProtKB-SubCell"/>
</dbReference>
<dbReference type="GO" id="GO:0005524">
    <property type="term" value="F:ATP binding"/>
    <property type="evidence" value="ECO:0007669"/>
    <property type="project" value="UniProtKB-UniRule"/>
</dbReference>
<dbReference type="GO" id="GO:0000287">
    <property type="term" value="F:magnesium ion binding"/>
    <property type="evidence" value="ECO:0007669"/>
    <property type="project" value="UniProtKB-UniRule"/>
</dbReference>
<dbReference type="GO" id="GO:0004642">
    <property type="term" value="F:phosphoribosylformylglycinamidine synthase activity"/>
    <property type="evidence" value="ECO:0007669"/>
    <property type="project" value="UniProtKB-UniRule"/>
</dbReference>
<dbReference type="GO" id="GO:0006189">
    <property type="term" value="P:'de novo' IMP biosynthetic process"/>
    <property type="evidence" value="ECO:0007669"/>
    <property type="project" value="UniProtKB-UniRule"/>
</dbReference>
<dbReference type="CDD" id="cd02203">
    <property type="entry name" value="PurL_repeat1"/>
    <property type="match status" value="1"/>
</dbReference>
<dbReference type="CDD" id="cd02204">
    <property type="entry name" value="PurL_repeat2"/>
    <property type="match status" value="1"/>
</dbReference>
<dbReference type="FunFam" id="3.30.1330.10:FF:000004">
    <property type="entry name" value="Phosphoribosylformylglycinamidine synthase subunit PurL"/>
    <property type="match status" value="1"/>
</dbReference>
<dbReference type="Gene3D" id="3.90.650.10">
    <property type="entry name" value="PurM-like C-terminal domain"/>
    <property type="match status" value="2"/>
</dbReference>
<dbReference type="Gene3D" id="3.30.1330.10">
    <property type="entry name" value="PurM-like, N-terminal domain"/>
    <property type="match status" value="2"/>
</dbReference>
<dbReference type="HAMAP" id="MF_00420">
    <property type="entry name" value="PurL_2"/>
    <property type="match status" value="1"/>
</dbReference>
<dbReference type="InterPro" id="IPR010074">
    <property type="entry name" value="PRibForGlyAmidine_synth_PurL"/>
</dbReference>
<dbReference type="InterPro" id="IPR041609">
    <property type="entry name" value="PurL_linker"/>
</dbReference>
<dbReference type="InterPro" id="IPR010918">
    <property type="entry name" value="PurM-like_C_dom"/>
</dbReference>
<dbReference type="InterPro" id="IPR036676">
    <property type="entry name" value="PurM-like_C_sf"/>
</dbReference>
<dbReference type="InterPro" id="IPR016188">
    <property type="entry name" value="PurM-like_N"/>
</dbReference>
<dbReference type="InterPro" id="IPR036921">
    <property type="entry name" value="PurM-like_N_sf"/>
</dbReference>
<dbReference type="NCBIfam" id="TIGR01736">
    <property type="entry name" value="FGAM_synth_II"/>
    <property type="match status" value="1"/>
</dbReference>
<dbReference type="NCBIfam" id="NF002290">
    <property type="entry name" value="PRK01213.1"/>
    <property type="match status" value="1"/>
</dbReference>
<dbReference type="PANTHER" id="PTHR43555">
    <property type="entry name" value="PHOSPHORIBOSYLFORMYLGLYCINAMIDINE SYNTHASE SUBUNIT PURL"/>
    <property type="match status" value="1"/>
</dbReference>
<dbReference type="PANTHER" id="PTHR43555:SF1">
    <property type="entry name" value="PHOSPHORIBOSYLFORMYLGLYCINAMIDINE SYNTHASE SUBUNIT PURL"/>
    <property type="match status" value="1"/>
</dbReference>
<dbReference type="Pfam" id="PF00586">
    <property type="entry name" value="AIRS"/>
    <property type="match status" value="2"/>
</dbReference>
<dbReference type="Pfam" id="PF02769">
    <property type="entry name" value="AIRS_C"/>
    <property type="match status" value="2"/>
</dbReference>
<dbReference type="Pfam" id="PF18072">
    <property type="entry name" value="FGAR-AT_linker"/>
    <property type="match status" value="1"/>
</dbReference>
<dbReference type="PIRSF" id="PIRSF001587">
    <property type="entry name" value="FGAM_synthase_II"/>
    <property type="match status" value="1"/>
</dbReference>
<dbReference type="SUPFAM" id="SSF56042">
    <property type="entry name" value="PurM C-terminal domain-like"/>
    <property type="match status" value="2"/>
</dbReference>
<dbReference type="SUPFAM" id="SSF55326">
    <property type="entry name" value="PurM N-terminal domain-like"/>
    <property type="match status" value="2"/>
</dbReference>
<evidence type="ECO:0000255" key="1">
    <source>
        <dbReference type="HAMAP-Rule" id="MF_00420"/>
    </source>
</evidence>
<keyword id="KW-0067">ATP-binding</keyword>
<keyword id="KW-0963">Cytoplasm</keyword>
<keyword id="KW-0436">Ligase</keyword>
<keyword id="KW-0460">Magnesium</keyword>
<keyword id="KW-0479">Metal-binding</keyword>
<keyword id="KW-0547">Nucleotide-binding</keyword>
<keyword id="KW-0658">Purine biosynthesis</keyword>
<keyword id="KW-1185">Reference proteome</keyword>
<name>PURL_STACT</name>